<gene>
    <name type="primary">Kpna3</name>
    <name type="synonym">Qip2</name>
</gene>
<keyword id="KW-0007">Acetylation</keyword>
<keyword id="KW-0963">Cytoplasm</keyword>
<keyword id="KW-0539">Nucleus</keyword>
<keyword id="KW-0597">Phosphoprotein</keyword>
<keyword id="KW-0653">Protein transport</keyword>
<keyword id="KW-1185">Reference proteome</keyword>
<keyword id="KW-0677">Repeat</keyword>
<keyword id="KW-0813">Transport</keyword>
<sequence>MAENPGLENHRIKSFKNKGRDVETMRRHRNEVTVELRKNKRDEHLLKKRNVPQEESLEDSDVDADFKAQNVTLEAILQNATSDNPVVQLSAVQAARKLLSSDRNPPIDDLIKSGILPILVKCLERDDNPSLQFEAAWALTNIASGTSAQTQAVVQSNAVPLFLRLLHSPHQNVCEQAVWALGNIIGDGPQCRDYVISLGVVKPLLSFINPSIPITFLRNVTWVIVNLCRNKDPPPPMETVQEILPALCVLIYHTDINILVDTVWALSYLTDGGNEQIQMVIDSGVVPFLVPLLSHQEVKVQTAALRAVGNIVTGTDEQTQVVLNCDVLSHFPNLLSHPKEKINKEAVWFLSNITAGNQQQVQAVIDAGLIPMIIHQLAKGDFGTQKEAAWAISNLTISGRKDQVEYLVQQNVIPPFCNLLSVKDSQVVQVVLDGLKNILIMAGDEASTIAEIIEECGGLEKIEVLQQHENEDIYKLAFEIIDQYFSGDDIDEDPSLIPEATQGGTYNFDPTANLQTKEFNF</sequence>
<feature type="initiator methionine" description="Removed" evidence="2">
    <location>
        <position position="1"/>
    </location>
</feature>
<feature type="chain" id="PRO_0000120725" description="Importin subunit alpha-4">
    <location>
        <begin position="2"/>
        <end position="521"/>
    </location>
</feature>
<feature type="domain" description="IBB" evidence="3">
    <location>
        <begin position="2"/>
        <end position="58"/>
    </location>
</feature>
<feature type="repeat" description="ARM 1; truncated">
    <location>
        <begin position="66"/>
        <end position="106"/>
    </location>
</feature>
<feature type="repeat" description="ARM 2">
    <location>
        <begin position="107"/>
        <end position="149"/>
    </location>
</feature>
<feature type="repeat" description="ARM 3">
    <location>
        <begin position="150"/>
        <end position="194"/>
    </location>
</feature>
<feature type="repeat" description="ARM 4">
    <location>
        <begin position="195"/>
        <end position="233"/>
    </location>
</feature>
<feature type="repeat" description="ARM 5">
    <location>
        <begin position="234"/>
        <end position="278"/>
    </location>
</feature>
<feature type="repeat" description="ARM 6">
    <location>
        <begin position="279"/>
        <end position="318"/>
    </location>
</feature>
<feature type="repeat" description="ARM 7">
    <location>
        <begin position="319"/>
        <end position="360"/>
    </location>
</feature>
<feature type="repeat" description="ARM 8">
    <location>
        <begin position="361"/>
        <end position="400"/>
    </location>
</feature>
<feature type="repeat" description="ARM 9">
    <location>
        <begin position="401"/>
        <end position="443"/>
    </location>
</feature>
<feature type="repeat" description="ARM 10; atypical">
    <location>
        <begin position="447"/>
        <end position="485"/>
    </location>
</feature>
<feature type="region of interest" description="Disordered" evidence="4">
    <location>
        <begin position="1"/>
        <end position="29"/>
    </location>
</feature>
<feature type="region of interest" description="NLS binding site (major)" evidence="1">
    <location>
        <begin position="137"/>
        <end position="229"/>
    </location>
</feature>
<feature type="region of interest" description="NLS binding site (minor)" evidence="1">
    <location>
        <begin position="306"/>
        <end position="394"/>
    </location>
</feature>
<feature type="short sequence motif" description="Nuclear localization signal" evidence="1">
    <location>
        <begin position="43"/>
        <end position="52"/>
    </location>
</feature>
<feature type="compositionally biased region" description="Basic and acidic residues" evidence="4">
    <location>
        <begin position="18"/>
        <end position="29"/>
    </location>
</feature>
<feature type="modified residue" description="N-acetylalanine" evidence="2">
    <location>
        <position position="2"/>
    </location>
</feature>
<feature type="modified residue" description="Phosphoserine" evidence="8">
    <location>
        <position position="56"/>
    </location>
</feature>
<feature type="modified residue" description="Phosphoserine" evidence="6 7 8">
    <location>
        <position position="60"/>
    </location>
</feature>
<feature type="modified residue" description="Phosphotyrosine" evidence="2">
    <location>
        <position position="484"/>
    </location>
</feature>
<dbReference type="EMBL" id="AF020772">
    <property type="protein sequence ID" value="AAC53372.1"/>
    <property type="molecule type" value="mRNA"/>
</dbReference>
<dbReference type="EMBL" id="BC026885">
    <property type="protein sequence ID" value="AAH26885.1"/>
    <property type="molecule type" value="mRNA"/>
</dbReference>
<dbReference type="CCDS" id="CCDS36942.1"/>
<dbReference type="RefSeq" id="NP_032492.1">
    <property type="nucleotide sequence ID" value="NM_008466.5"/>
</dbReference>
<dbReference type="SMR" id="O35344"/>
<dbReference type="BioGRID" id="201008">
    <property type="interactions" value="18"/>
</dbReference>
<dbReference type="ComplexPortal" id="CPX-1058">
    <property type="entry name" value="Importin complex, KPNA3 variant"/>
</dbReference>
<dbReference type="DIP" id="DIP-62054N"/>
<dbReference type="FunCoup" id="O35344">
    <property type="interactions" value="3697"/>
</dbReference>
<dbReference type="IntAct" id="O35344">
    <property type="interactions" value="4"/>
</dbReference>
<dbReference type="MINT" id="O35344"/>
<dbReference type="STRING" id="10090.ENSMUSP00000022496"/>
<dbReference type="ChEMBL" id="CHEMBL4879412"/>
<dbReference type="GlyGen" id="O35344">
    <property type="glycosylation" value="1 site, 1 N-linked glycan (1 site)"/>
</dbReference>
<dbReference type="iPTMnet" id="O35344"/>
<dbReference type="PhosphoSitePlus" id="O35344"/>
<dbReference type="SwissPalm" id="O35344"/>
<dbReference type="jPOST" id="O35344"/>
<dbReference type="PaxDb" id="10090-ENSMUSP00000022496"/>
<dbReference type="PeptideAtlas" id="O35344"/>
<dbReference type="ProteomicsDB" id="266976"/>
<dbReference type="Pumba" id="O35344"/>
<dbReference type="Antibodypedia" id="23966">
    <property type="antibodies" value="202 antibodies from 32 providers"/>
</dbReference>
<dbReference type="DNASU" id="16648"/>
<dbReference type="Ensembl" id="ENSMUST00000022496.9">
    <property type="protein sequence ID" value="ENSMUSP00000022496.8"/>
    <property type="gene ID" value="ENSMUSG00000021929.10"/>
</dbReference>
<dbReference type="GeneID" id="16648"/>
<dbReference type="KEGG" id="mmu:16648"/>
<dbReference type="UCSC" id="uc007ufw.2">
    <property type="organism name" value="mouse"/>
</dbReference>
<dbReference type="AGR" id="MGI:1100863"/>
<dbReference type="CTD" id="3839"/>
<dbReference type="MGI" id="MGI:1100863">
    <property type="gene designation" value="Kpna3"/>
</dbReference>
<dbReference type="VEuPathDB" id="HostDB:ENSMUSG00000021929"/>
<dbReference type="eggNOG" id="KOG0166">
    <property type="taxonomic scope" value="Eukaryota"/>
</dbReference>
<dbReference type="GeneTree" id="ENSGT01050000244891"/>
<dbReference type="HOGENOM" id="CLU_018084_6_1_1"/>
<dbReference type="InParanoid" id="O35344"/>
<dbReference type="OMA" id="GGNEHIQ"/>
<dbReference type="OrthoDB" id="29145at2759"/>
<dbReference type="PhylomeDB" id="O35344"/>
<dbReference type="TreeFam" id="TF101178"/>
<dbReference type="BioGRID-ORCS" id="16648">
    <property type="hits" value="2 hits in 76 CRISPR screens"/>
</dbReference>
<dbReference type="ChiTaRS" id="Kpna3">
    <property type="organism name" value="mouse"/>
</dbReference>
<dbReference type="PRO" id="PR:O35344"/>
<dbReference type="Proteomes" id="UP000000589">
    <property type="component" value="Chromosome 14"/>
</dbReference>
<dbReference type="RNAct" id="O35344">
    <property type="molecule type" value="protein"/>
</dbReference>
<dbReference type="Bgee" id="ENSMUSG00000021929">
    <property type="expression patterns" value="Expressed in extensor digitorum longus and 264 other cell types or tissues"/>
</dbReference>
<dbReference type="ExpressionAtlas" id="O35344">
    <property type="expression patterns" value="baseline and differential"/>
</dbReference>
<dbReference type="GO" id="GO:0005829">
    <property type="term" value="C:cytosol"/>
    <property type="evidence" value="ECO:0000303"/>
    <property type="project" value="ComplexPortal"/>
</dbReference>
<dbReference type="GO" id="GO:0042564">
    <property type="term" value="C:NLS-dependent protein nuclear import complex"/>
    <property type="evidence" value="ECO:0000266"/>
    <property type="project" value="ComplexPortal"/>
</dbReference>
<dbReference type="GO" id="GO:0005654">
    <property type="term" value="C:nucleoplasm"/>
    <property type="evidence" value="ECO:0000303"/>
    <property type="project" value="ComplexPortal"/>
</dbReference>
<dbReference type="GO" id="GO:0061608">
    <property type="term" value="F:nuclear import signal receptor activity"/>
    <property type="evidence" value="ECO:0007669"/>
    <property type="project" value="InterPro"/>
</dbReference>
<dbReference type="GO" id="GO:0006606">
    <property type="term" value="P:protein import into nucleus"/>
    <property type="evidence" value="ECO:0000250"/>
    <property type="project" value="ComplexPortal"/>
</dbReference>
<dbReference type="FunFam" id="1.20.5.690:FF:000004">
    <property type="entry name" value="Importin subunit alpha"/>
    <property type="match status" value="1"/>
</dbReference>
<dbReference type="FunFam" id="1.25.10.10:FF:000009">
    <property type="entry name" value="Importin subunit alpha"/>
    <property type="match status" value="1"/>
</dbReference>
<dbReference type="Gene3D" id="1.20.5.690">
    <property type="entry name" value="Importin-alpha, importin-beta-binding domain"/>
    <property type="match status" value="1"/>
</dbReference>
<dbReference type="Gene3D" id="1.25.10.10">
    <property type="entry name" value="Leucine-rich Repeat Variant"/>
    <property type="match status" value="1"/>
</dbReference>
<dbReference type="InterPro" id="IPR011989">
    <property type="entry name" value="ARM-like"/>
</dbReference>
<dbReference type="InterPro" id="IPR016024">
    <property type="entry name" value="ARM-type_fold"/>
</dbReference>
<dbReference type="InterPro" id="IPR032413">
    <property type="entry name" value="Arm_3"/>
</dbReference>
<dbReference type="InterPro" id="IPR000225">
    <property type="entry name" value="Armadillo"/>
</dbReference>
<dbReference type="InterPro" id="IPR002652">
    <property type="entry name" value="Importin-a_IBB"/>
</dbReference>
<dbReference type="InterPro" id="IPR036975">
    <property type="entry name" value="Importin-a_IBB_sf"/>
</dbReference>
<dbReference type="InterPro" id="IPR024931">
    <property type="entry name" value="Importin_alpha"/>
</dbReference>
<dbReference type="PANTHER" id="PTHR23316">
    <property type="entry name" value="IMPORTIN ALPHA"/>
    <property type="match status" value="1"/>
</dbReference>
<dbReference type="Pfam" id="PF00514">
    <property type="entry name" value="Arm"/>
    <property type="match status" value="8"/>
</dbReference>
<dbReference type="Pfam" id="PF16186">
    <property type="entry name" value="Arm_3"/>
    <property type="match status" value="1"/>
</dbReference>
<dbReference type="Pfam" id="PF01749">
    <property type="entry name" value="IBB"/>
    <property type="match status" value="1"/>
</dbReference>
<dbReference type="PIRSF" id="PIRSF005673">
    <property type="entry name" value="Importin_alpha"/>
    <property type="match status" value="1"/>
</dbReference>
<dbReference type="SMART" id="SM00185">
    <property type="entry name" value="ARM"/>
    <property type="match status" value="8"/>
</dbReference>
<dbReference type="SUPFAM" id="SSF48371">
    <property type="entry name" value="ARM repeat"/>
    <property type="match status" value="1"/>
</dbReference>
<dbReference type="PROSITE" id="PS50176">
    <property type="entry name" value="ARM_REPEAT"/>
    <property type="match status" value="3"/>
</dbReference>
<dbReference type="PROSITE" id="PS51214">
    <property type="entry name" value="IBB"/>
    <property type="match status" value="1"/>
</dbReference>
<evidence type="ECO:0000250" key="1"/>
<evidence type="ECO:0000250" key="2">
    <source>
        <dbReference type="UniProtKB" id="O00505"/>
    </source>
</evidence>
<evidence type="ECO:0000255" key="3">
    <source>
        <dbReference type="PROSITE-ProRule" id="PRU00561"/>
    </source>
</evidence>
<evidence type="ECO:0000256" key="4">
    <source>
        <dbReference type="SAM" id="MobiDB-lite"/>
    </source>
</evidence>
<evidence type="ECO:0000305" key="5"/>
<evidence type="ECO:0007744" key="6">
    <source>
    </source>
</evidence>
<evidence type="ECO:0007744" key="7">
    <source>
    </source>
</evidence>
<evidence type="ECO:0007744" key="8">
    <source>
    </source>
</evidence>
<organism>
    <name type="scientific">Mus musculus</name>
    <name type="common">Mouse</name>
    <dbReference type="NCBI Taxonomy" id="10090"/>
    <lineage>
        <taxon>Eukaryota</taxon>
        <taxon>Metazoa</taxon>
        <taxon>Chordata</taxon>
        <taxon>Craniata</taxon>
        <taxon>Vertebrata</taxon>
        <taxon>Euteleostomi</taxon>
        <taxon>Mammalia</taxon>
        <taxon>Eutheria</taxon>
        <taxon>Euarchontoglires</taxon>
        <taxon>Glires</taxon>
        <taxon>Rodentia</taxon>
        <taxon>Myomorpha</taxon>
        <taxon>Muroidea</taxon>
        <taxon>Muridae</taxon>
        <taxon>Murinae</taxon>
        <taxon>Mus</taxon>
        <taxon>Mus</taxon>
    </lineage>
</organism>
<reference key="1">
    <citation type="journal article" date="1997" name="FEBS Lett.">
        <title>Identification of novel homologues of mouse importin alpha, the alpha subunit of the nuclear pore-targeting complex, and their tissue-specific expression.</title>
        <authorList>
            <person name="Tsuji L."/>
            <person name="Takumi T."/>
            <person name="Imamoto N."/>
            <person name="Yoneda Y."/>
        </authorList>
    </citation>
    <scope>NUCLEOTIDE SEQUENCE [MRNA]</scope>
</reference>
<reference key="2">
    <citation type="journal article" date="2004" name="Genome Res.">
        <title>The status, quality, and expansion of the NIH full-length cDNA project: the Mammalian Gene Collection (MGC).</title>
        <authorList>
            <consortium name="The MGC Project Team"/>
        </authorList>
    </citation>
    <scope>NUCLEOTIDE SEQUENCE [LARGE SCALE MRNA]</scope>
    <source>
        <strain>FVB/N</strain>
        <tissue>Mammary gland</tissue>
    </source>
</reference>
<reference key="3">
    <citation type="journal article" date="2007" name="Proc. Natl. Acad. Sci. U.S.A.">
        <title>Large-scale phosphorylation analysis of mouse liver.</title>
        <authorList>
            <person name="Villen J."/>
            <person name="Beausoleil S.A."/>
            <person name="Gerber S.A."/>
            <person name="Gygi S.P."/>
        </authorList>
    </citation>
    <scope>PHOSPHORYLATION [LARGE SCALE ANALYSIS] AT SER-60</scope>
    <scope>IDENTIFICATION BY MASS SPECTROMETRY [LARGE SCALE ANALYSIS]</scope>
    <source>
        <tissue>Liver</tissue>
    </source>
</reference>
<reference key="4">
    <citation type="journal article" date="2009" name="Immunity">
        <title>The phagosomal proteome in interferon-gamma-activated macrophages.</title>
        <authorList>
            <person name="Trost M."/>
            <person name="English L."/>
            <person name="Lemieux S."/>
            <person name="Courcelles M."/>
            <person name="Desjardins M."/>
            <person name="Thibault P."/>
        </authorList>
    </citation>
    <scope>PHOSPHORYLATION [LARGE SCALE ANALYSIS] AT SER-60</scope>
    <scope>IDENTIFICATION BY MASS SPECTROMETRY [LARGE SCALE ANALYSIS]</scope>
</reference>
<reference key="5">
    <citation type="journal article" date="2010" name="Cell">
        <title>A tissue-specific atlas of mouse protein phosphorylation and expression.</title>
        <authorList>
            <person name="Huttlin E.L."/>
            <person name="Jedrychowski M.P."/>
            <person name="Elias J.E."/>
            <person name="Goswami T."/>
            <person name="Rad R."/>
            <person name="Beausoleil S.A."/>
            <person name="Villen J."/>
            <person name="Haas W."/>
            <person name="Sowa M.E."/>
            <person name="Gygi S.P."/>
        </authorList>
    </citation>
    <scope>PHOSPHORYLATION [LARGE SCALE ANALYSIS] AT SER-56 AND SER-60</scope>
    <scope>IDENTIFICATION BY MASS SPECTROMETRY [LARGE SCALE ANALYSIS]</scope>
    <source>
        <tissue>Brain</tissue>
        <tissue>Brown adipose tissue</tissue>
        <tissue>Heart</tissue>
        <tissue>Kidney</tissue>
        <tissue>Liver</tissue>
        <tissue>Lung</tissue>
        <tissue>Pancreas</tissue>
        <tissue>Spleen</tissue>
        <tissue>Testis</tissue>
    </source>
</reference>
<comment type="function">
    <text>Functions in nuclear protein import as an adapter protein for nuclear receptor KPNB1. Binds specifically and directly to substrates containing either a simple or bipartite NLS motif. Docking of the importin/substrate complex to the nuclear pore complex (NPC) is mediated by KPNB1 through binding to nucleoporin FxFG repeats and the complex is subsequently translocated through the pore by an energy requiring, Ran-dependent mechanism. At the nucleoplasmic side of the NPC, Ran binds to importin-beta and the three components separate and importin-alpha and -beta are re-exported from the nucleus to the cytoplasm where GTP hydrolysis releases Ran from importin. The directionality of nuclear import is thought to be conferred by an asymmetric distribution of the GTP- and GDP-bound forms of Ran between the cytoplasm and nucleus. In vitro, mediates the nuclear import of human cytomegalovirus UL84 by recognizing a non-classical NLS.</text>
</comment>
<comment type="subunit">
    <text evidence="2">Forms a complex with importin subunit beta-1. Interacts with DDX21. Interacts with NCBP1, NCBP2/CBP20 and NCBP3. Interacts with RCC1. Interacts with ZC3H11A (By similarity).</text>
</comment>
<comment type="subcellular location">
    <subcellularLocation>
        <location evidence="2">Cytoplasm</location>
    </subcellularLocation>
    <subcellularLocation>
        <location evidence="2">Nucleus</location>
    </subcellularLocation>
</comment>
<comment type="tissue specificity">
    <text>Detected more or less in all tissues examined (Ehrlich ascites tumor cells, testis, kidney, spleen, liver, heart, lung, thymus, skeletal muscle, cerebellum and brain (without cerebellum)).</text>
</comment>
<comment type="domain">
    <text>Consists of an N-terminal hydrophilic region, a hydrophobic central region composed of 10 repeats, and a short hydrophilic C-terminus. The N-terminal hydrophilic region contains the importin beta binding domain (IBB domain), which is sufficient for binding importin beta and essential for nuclear protein import.</text>
</comment>
<comment type="domain">
    <text evidence="1">The IBB domain is thought to act as an intrasteric autoregulatory sequence by interacting with the internal autoinhibitory NLS. Binding of KPNB1 probably overlaps the internal NLS and contributes to a high affinity for cytoplasmic NLS-containing cargo substrates. After dissociation of the importin/substrate complex in the nucleus the internal autohibitory NLS contributes to a low affinity for nuclear NLS-containing proteins (By similarity).</text>
</comment>
<comment type="domain">
    <text evidence="1">The major and minor NLS binding sites are mainly involved in recognition of simple or bipartite NLS motifs. Structurally located within in a helical surface groove they contain several conserved Trp and Asn residues of the corresponding third helices (H3) of ARM repeats which mainly contribute to binding (By similarity).</text>
</comment>
<comment type="similarity">
    <text evidence="5">Belongs to the importin alpha family.</text>
</comment>
<name>IMA4_MOUSE</name>
<protein>
    <recommendedName>
        <fullName>Importin subunit alpha-4</fullName>
    </recommendedName>
    <alternativeName>
        <fullName>Importin alpha Q2</fullName>
        <shortName>Qip2</shortName>
    </alternativeName>
    <alternativeName>
        <fullName>Karyopherin subunit alpha-3</fullName>
    </alternativeName>
</protein>
<proteinExistence type="evidence at protein level"/>
<accession>O35344</accession>